<accession>A9BBQ7</accession>
<dbReference type="EC" id="2.8.1.13" evidence="1"/>
<dbReference type="EMBL" id="CP000878">
    <property type="protein sequence ID" value="ABX09269.1"/>
    <property type="molecule type" value="Genomic_DNA"/>
</dbReference>
<dbReference type="SMR" id="A9BBQ7"/>
<dbReference type="STRING" id="93059.P9211_13381"/>
<dbReference type="KEGG" id="pmj:P9211_13381"/>
<dbReference type="eggNOG" id="COG0482">
    <property type="taxonomic scope" value="Bacteria"/>
</dbReference>
<dbReference type="HOGENOM" id="CLU_035188_0_0_3"/>
<dbReference type="OrthoDB" id="9800696at2"/>
<dbReference type="Proteomes" id="UP000000788">
    <property type="component" value="Chromosome"/>
</dbReference>
<dbReference type="GO" id="GO:0005737">
    <property type="term" value="C:cytoplasm"/>
    <property type="evidence" value="ECO:0007669"/>
    <property type="project" value="UniProtKB-SubCell"/>
</dbReference>
<dbReference type="GO" id="GO:0005524">
    <property type="term" value="F:ATP binding"/>
    <property type="evidence" value="ECO:0007669"/>
    <property type="project" value="UniProtKB-KW"/>
</dbReference>
<dbReference type="GO" id="GO:0000049">
    <property type="term" value="F:tRNA binding"/>
    <property type="evidence" value="ECO:0007669"/>
    <property type="project" value="UniProtKB-KW"/>
</dbReference>
<dbReference type="GO" id="GO:0103016">
    <property type="term" value="F:tRNA-uridine 2-sulfurtransferase activity"/>
    <property type="evidence" value="ECO:0007669"/>
    <property type="project" value="UniProtKB-EC"/>
</dbReference>
<dbReference type="GO" id="GO:0002143">
    <property type="term" value="P:tRNA wobble position uridine thiolation"/>
    <property type="evidence" value="ECO:0007669"/>
    <property type="project" value="TreeGrafter"/>
</dbReference>
<dbReference type="CDD" id="cd01998">
    <property type="entry name" value="MnmA_TRMU-like"/>
    <property type="match status" value="1"/>
</dbReference>
<dbReference type="FunFam" id="2.30.30.280:FF:000001">
    <property type="entry name" value="tRNA-specific 2-thiouridylase MnmA"/>
    <property type="match status" value="1"/>
</dbReference>
<dbReference type="Gene3D" id="2.30.30.280">
    <property type="entry name" value="Adenine nucleotide alpha hydrolases-like domains"/>
    <property type="match status" value="1"/>
</dbReference>
<dbReference type="Gene3D" id="3.40.50.620">
    <property type="entry name" value="HUPs"/>
    <property type="match status" value="1"/>
</dbReference>
<dbReference type="Gene3D" id="2.40.30.10">
    <property type="entry name" value="Translation factors"/>
    <property type="match status" value="1"/>
</dbReference>
<dbReference type="HAMAP" id="MF_00144">
    <property type="entry name" value="tRNA_thiouridyl_MnmA"/>
    <property type="match status" value="1"/>
</dbReference>
<dbReference type="InterPro" id="IPR004506">
    <property type="entry name" value="MnmA-like"/>
</dbReference>
<dbReference type="InterPro" id="IPR046885">
    <property type="entry name" value="MnmA-like_C"/>
</dbReference>
<dbReference type="InterPro" id="IPR046884">
    <property type="entry name" value="MnmA-like_central"/>
</dbReference>
<dbReference type="InterPro" id="IPR023382">
    <property type="entry name" value="MnmA-like_central_sf"/>
</dbReference>
<dbReference type="InterPro" id="IPR014729">
    <property type="entry name" value="Rossmann-like_a/b/a_fold"/>
</dbReference>
<dbReference type="NCBIfam" id="NF001138">
    <property type="entry name" value="PRK00143.1"/>
    <property type="match status" value="1"/>
</dbReference>
<dbReference type="NCBIfam" id="TIGR00420">
    <property type="entry name" value="trmU"/>
    <property type="match status" value="1"/>
</dbReference>
<dbReference type="PANTHER" id="PTHR11933:SF5">
    <property type="entry name" value="MITOCHONDRIAL TRNA-SPECIFIC 2-THIOURIDYLASE 1"/>
    <property type="match status" value="1"/>
</dbReference>
<dbReference type="PANTHER" id="PTHR11933">
    <property type="entry name" value="TRNA 5-METHYLAMINOMETHYL-2-THIOURIDYLATE -METHYLTRANSFERASE"/>
    <property type="match status" value="1"/>
</dbReference>
<dbReference type="Pfam" id="PF03054">
    <property type="entry name" value="tRNA_Me_trans"/>
    <property type="match status" value="1"/>
</dbReference>
<dbReference type="Pfam" id="PF20258">
    <property type="entry name" value="tRNA_Me_trans_C"/>
    <property type="match status" value="1"/>
</dbReference>
<dbReference type="Pfam" id="PF20259">
    <property type="entry name" value="tRNA_Me_trans_M"/>
    <property type="match status" value="1"/>
</dbReference>
<dbReference type="SUPFAM" id="SSF52402">
    <property type="entry name" value="Adenine nucleotide alpha hydrolases-like"/>
    <property type="match status" value="1"/>
</dbReference>
<evidence type="ECO:0000255" key="1">
    <source>
        <dbReference type="HAMAP-Rule" id="MF_00144"/>
    </source>
</evidence>
<proteinExistence type="inferred from homology"/>
<comment type="function">
    <text evidence="1">Catalyzes the 2-thiolation of uridine at the wobble position (U34) of tRNA, leading to the formation of s(2)U34.</text>
</comment>
<comment type="catalytic activity">
    <reaction evidence="1">
        <text>S-sulfanyl-L-cysteinyl-[protein] + uridine(34) in tRNA + AH2 + ATP = 2-thiouridine(34) in tRNA + L-cysteinyl-[protein] + A + AMP + diphosphate + H(+)</text>
        <dbReference type="Rhea" id="RHEA:47032"/>
        <dbReference type="Rhea" id="RHEA-COMP:10131"/>
        <dbReference type="Rhea" id="RHEA-COMP:11726"/>
        <dbReference type="Rhea" id="RHEA-COMP:11727"/>
        <dbReference type="Rhea" id="RHEA-COMP:11728"/>
        <dbReference type="ChEBI" id="CHEBI:13193"/>
        <dbReference type="ChEBI" id="CHEBI:15378"/>
        <dbReference type="ChEBI" id="CHEBI:17499"/>
        <dbReference type="ChEBI" id="CHEBI:29950"/>
        <dbReference type="ChEBI" id="CHEBI:30616"/>
        <dbReference type="ChEBI" id="CHEBI:33019"/>
        <dbReference type="ChEBI" id="CHEBI:61963"/>
        <dbReference type="ChEBI" id="CHEBI:65315"/>
        <dbReference type="ChEBI" id="CHEBI:87170"/>
        <dbReference type="ChEBI" id="CHEBI:456215"/>
        <dbReference type="EC" id="2.8.1.13"/>
    </reaction>
</comment>
<comment type="subcellular location">
    <subcellularLocation>
        <location evidence="1">Cytoplasm</location>
    </subcellularLocation>
</comment>
<comment type="similarity">
    <text evidence="1">Belongs to the MnmA/TRMU family.</text>
</comment>
<gene>
    <name evidence="1" type="primary">mnmA</name>
    <name type="ordered locus">P9211_13381</name>
</gene>
<protein>
    <recommendedName>
        <fullName evidence="1">tRNA-specific 2-thiouridylase MnmA</fullName>
        <ecNumber evidence="1">2.8.1.13</ecNumber>
    </recommendedName>
</protein>
<sequence length="406" mass="45472">MAMKSQKAKPISNKSKLERSPIEMEVVSHLKQLQGEHAIAVGLSGGVDSSLTAALLVEAGWKVEGLTLWLMEGKGSCCTEGLVDAAGICEQLKIPHHVVDERSTFQKEVVENLVNGYQEGITPLPCSRCNRFVKFSPMINWARKNRNLKRIATGHYARIKHAETNKLNSLDERKNRHQLLRGIDQNKDQSYFLYDLSQEILGHVVFPLGALTKSFTRKEANRYGLRTANKKESQDLCLAEKHGSMKAFLNNYLPPRKGEIVLTDGLVVGEHDGIEHFTIGQRKGLGIAWKEPLHVINIQPSLNRVIVGPRDQSGRSNCTVGEVNWVSISAPMQERLVEVQVRYRSDPVKAKLVPIEPTIKDIKNNRPHRCRIEFENPQFSISPGQAAVFYKGEVVLGGGIIQPFEY</sequence>
<reference key="1">
    <citation type="journal article" date="2007" name="PLoS Genet.">
        <title>Patterns and implications of gene gain and loss in the evolution of Prochlorococcus.</title>
        <authorList>
            <person name="Kettler G.C."/>
            <person name="Martiny A.C."/>
            <person name="Huang K."/>
            <person name="Zucker J."/>
            <person name="Coleman M.L."/>
            <person name="Rodrigue S."/>
            <person name="Chen F."/>
            <person name="Lapidus A."/>
            <person name="Ferriera S."/>
            <person name="Johnson J."/>
            <person name="Steglich C."/>
            <person name="Church G.M."/>
            <person name="Richardson P."/>
            <person name="Chisholm S.W."/>
        </authorList>
    </citation>
    <scope>NUCLEOTIDE SEQUENCE [LARGE SCALE GENOMIC DNA]</scope>
    <source>
        <strain>MIT 9211</strain>
    </source>
</reference>
<feature type="chain" id="PRO_0000349744" description="tRNA-specific 2-thiouridylase MnmA">
    <location>
        <begin position="1"/>
        <end position="406"/>
    </location>
</feature>
<feature type="region of interest" description="Interaction with tRNA" evidence="1">
    <location>
        <begin position="187"/>
        <end position="189"/>
    </location>
</feature>
<feature type="region of interest" description="Interaction with tRNA" evidence="1">
    <location>
        <begin position="342"/>
        <end position="343"/>
    </location>
</feature>
<feature type="active site" description="Nucleophile" evidence="1">
    <location>
        <position position="129"/>
    </location>
</feature>
<feature type="active site" description="Cysteine persulfide intermediate" evidence="1">
    <location>
        <position position="237"/>
    </location>
</feature>
<feature type="binding site" evidence="1">
    <location>
        <begin position="42"/>
        <end position="49"/>
    </location>
    <ligand>
        <name>ATP</name>
        <dbReference type="ChEBI" id="CHEBI:30616"/>
    </ligand>
</feature>
<feature type="binding site" evidence="1">
    <location>
        <position position="68"/>
    </location>
    <ligand>
        <name>ATP</name>
        <dbReference type="ChEBI" id="CHEBI:30616"/>
    </ligand>
</feature>
<feature type="binding site" evidence="1">
    <location>
        <position position="154"/>
    </location>
    <ligand>
        <name>ATP</name>
        <dbReference type="ChEBI" id="CHEBI:30616"/>
    </ligand>
</feature>
<feature type="site" description="Interaction with tRNA" evidence="1">
    <location>
        <position position="155"/>
    </location>
</feature>
<feature type="site" description="Interaction with tRNA" evidence="1">
    <location>
        <position position="385"/>
    </location>
</feature>
<feature type="disulfide bond" description="Alternate" evidence="1">
    <location>
        <begin position="129"/>
        <end position="237"/>
    </location>
</feature>
<keyword id="KW-0067">ATP-binding</keyword>
<keyword id="KW-0963">Cytoplasm</keyword>
<keyword id="KW-1015">Disulfide bond</keyword>
<keyword id="KW-0547">Nucleotide-binding</keyword>
<keyword id="KW-1185">Reference proteome</keyword>
<keyword id="KW-0694">RNA-binding</keyword>
<keyword id="KW-0808">Transferase</keyword>
<keyword id="KW-0819">tRNA processing</keyword>
<keyword id="KW-0820">tRNA-binding</keyword>
<name>MNMA_PROM4</name>
<organism>
    <name type="scientific">Prochlorococcus marinus (strain MIT 9211)</name>
    <dbReference type="NCBI Taxonomy" id="93059"/>
    <lineage>
        <taxon>Bacteria</taxon>
        <taxon>Bacillati</taxon>
        <taxon>Cyanobacteriota</taxon>
        <taxon>Cyanophyceae</taxon>
        <taxon>Synechococcales</taxon>
        <taxon>Prochlorococcaceae</taxon>
        <taxon>Prochlorococcus</taxon>
    </lineage>
</organism>